<dbReference type="EC" id="4.1.1.48" evidence="1"/>
<dbReference type="EMBL" id="CP000660">
    <property type="protein sequence ID" value="ABP51786.1"/>
    <property type="molecule type" value="Genomic_DNA"/>
</dbReference>
<dbReference type="SMR" id="A4WN19"/>
<dbReference type="STRING" id="340102.Pars_2240"/>
<dbReference type="KEGG" id="pas:Pars_2240"/>
<dbReference type="HOGENOM" id="CLU_034247_0_1_2"/>
<dbReference type="OrthoDB" id="15223at2157"/>
<dbReference type="PhylomeDB" id="A4WN19"/>
<dbReference type="UniPathway" id="UPA00035">
    <property type="reaction ID" value="UER00043"/>
</dbReference>
<dbReference type="Proteomes" id="UP000001567">
    <property type="component" value="Chromosome"/>
</dbReference>
<dbReference type="GO" id="GO:0004425">
    <property type="term" value="F:indole-3-glycerol-phosphate synthase activity"/>
    <property type="evidence" value="ECO:0007669"/>
    <property type="project" value="UniProtKB-UniRule"/>
</dbReference>
<dbReference type="GO" id="GO:0004640">
    <property type="term" value="F:phosphoribosylanthranilate isomerase activity"/>
    <property type="evidence" value="ECO:0007669"/>
    <property type="project" value="TreeGrafter"/>
</dbReference>
<dbReference type="GO" id="GO:0000162">
    <property type="term" value="P:L-tryptophan biosynthetic process"/>
    <property type="evidence" value="ECO:0007669"/>
    <property type="project" value="UniProtKB-UniRule"/>
</dbReference>
<dbReference type="CDD" id="cd00331">
    <property type="entry name" value="IGPS"/>
    <property type="match status" value="1"/>
</dbReference>
<dbReference type="Gene3D" id="3.20.20.70">
    <property type="entry name" value="Aldolase class I"/>
    <property type="match status" value="1"/>
</dbReference>
<dbReference type="HAMAP" id="MF_00134_A">
    <property type="entry name" value="IGPS_A"/>
    <property type="match status" value="1"/>
</dbReference>
<dbReference type="InterPro" id="IPR013785">
    <property type="entry name" value="Aldolase_TIM"/>
</dbReference>
<dbReference type="InterPro" id="IPR045186">
    <property type="entry name" value="Indole-3-glycerol_P_synth"/>
</dbReference>
<dbReference type="InterPro" id="IPR013798">
    <property type="entry name" value="Indole-3-glycerol_P_synth_dom"/>
</dbReference>
<dbReference type="InterPro" id="IPR001468">
    <property type="entry name" value="Indole-3-GlycerolPSynthase_CS"/>
</dbReference>
<dbReference type="InterPro" id="IPR011060">
    <property type="entry name" value="RibuloseP-bd_barrel"/>
</dbReference>
<dbReference type="PANTHER" id="PTHR22854:SF2">
    <property type="entry name" value="INDOLE-3-GLYCEROL-PHOSPHATE SYNTHASE"/>
    <property type="match status" value="1"/>
</dbReference>
<dbReference type="PANTHER" id="PTHR22854">
    <property type="entry name" value="TRYPTOPHAN BIOSYNTHESIS PROTEIN"/>
    <property type="match status" value="1"/>
</dbReference>
<dbReference type="Pfam" id="PF00218">
    <property type="entry name" value="IGPS"/>
    <property type="match status" value="1"/>
</dbReference>
<dbReference type="SUPFAM" id="SSF51366">
    <property type="entry name" value="Ribulose-phoshate binding barrel"/>
    <property type="match status" value="1"/>
</dbReference>
<dbReference type="PROSITE" id="PS00614">
    <property type="entry name" value="IGPS"/>
    <property type="match status" value="1"/>
</dbReference>
<gene>
    <name evidence="1" type="primary">trpC</name>
    <name type="ordered locus">Pars_2240</name>
</gene>
<feature type="chain" id="PRO_1000198792" description="Indole-3-glycerol phosphate synthase">
    <location>
        <begin position="1"/>
        <end position="249"/>
    </location>
</feature>
<name>TRPC_PYRAR</name>
<reference key="1">
    <citation type="submission" date="2007-04" db="EMBL/GenBank/DDBJ databases">
        <title>Complete sequence of Pyrobaculum arsenaticum DSM 13514.</title>
        <authorList>
            <consortium name="US DOE Joint Genome Institute"/>
            <person name="Copeland A."/>
            <person name="Lucas S."/>
            <person name="Lapidus A."/>
            <person name="Barry K."/>
            <person name="Glavina del Rio T."/>
            <person name="Dalin E."/>
            <person name="Tice H."/>
            <person name="Pitluck S."/>
            <person name="Chain P."/>
            <person name="Malfatti S."/>
            <person name="Shin M."/>
            <person name="Vergez L."/>
            <person name="Schmutz J."/>
            <person name="Larimer F."/>
            <person name="Land M."/>
            <person name="Hauser L."/>
            <person name="Kyrpides N."/>
            <person name="Mikhailova N."/>
            <person name="Cozen A.E."/>
            <person name="Fitz-Gibbon S.T."/>
            <person name="House C.H."/>
            <person name="Saltikov C."/>
            <person name="Lowe T.M."/>
            <person name="Richardson P."/>
        </authorList>
    </citation>
    <scope>NUCLEOTIDE SEQUENCE [LARGE SCALE GENOMIC DNA]</scope>
    <source>
        <strain>ATCC 700994 / DSM 13514 / JCM 11321 / PZ6</strain>
    </source>
</reference>
<sequence length="249" mass="27726">MDFLAQVKKAVELRLATEPSPPARSLPLVDFSKALGEFGIIAEYKRASPRGVVRLDMPPWAYFAMLQPYAAAFSVLTEPYWFLGDYRFITMAKPFKPVLMKDFVIDNRQIDMAYGYGADAVLIIYRLVGREKAMELAEYAQRLGLTPVVEVDNLQDAKEAATWGGKVMLGINARDLATLEVSLQKAFEIAKALRGDVDFIIESGISKPEEVEKACMLYARGVLVGTALMKNPALIKELRHAAESCVSRR</sequence>
<organism>
    <name type="scientific">Pyrobaculum arsenaticum (strain DSM 13514 / JCM 11321 / PZ6)</name>
    <dbReference type="NCBI Taxonomy" id="340102"/>
    <lineage>
        <taxon>Archaea</taxon>
        <taxon>Thermoproteota</taxon>
        <taxon>Thermoprotei</taxon>
        <taxon>Thermoproteales</taxon>
        <taxon>Thermoproteaceae</taxon>
        <taxon>Pyrobaculum</taxon>
    </lineage>
</organism>
<accession>A4WN19</accession>
<keyword id="KW-0028">Amino-acid biosynthesis</keyword>
<keyword id="KW-0057">Aromatic amino acid biosynthesis</keyword>
<keyword id="KW-0210">Decarboxylase</keyword>
<keyword id="KW-0456">Lyase</keyword>
<keyword id="KW-0822">Tryptophan biosynthesis</keyword>
<proteinExistence type="inferred from homology"/>
<comment type="catalytic activity">
    <reaction evidence="1">
        <text>1-(2-carboxyphenylamino)-1-deoxy-D-ribulose 5-phosphate + H(+) = (1S,2R)-1-C-(indol-3-yl)glycerol 3-phosphate + CO2 + H2O</text>
        <dbReference type="Rhea" id="RHEA:23476"/>
        <dbReference type="ChEBI" id="CHEBI:15377"/>
        <dbReference type="ChEBI" id="CHEBI:15378"/>
        <dbReference type="ChEBI" id="CHEBI:16526"/>
        <dbReference type="ChEBI" id="CHEBI:58613"/>
        <dbReference type="ChEBI" id="CHEBI:58866"/>
        <dbReference type="EC" id="4.1.1.48"/>
    </reaction>
</comment>
<comment type="pathway">
    <text evidence="1">Amino-acid biosynthesis; L-tryptophan biosynthesis; L-tryptophan from chorismate: step 4/5.</text>
</comment>
<comment type="similarity">
    <text evidence="1">Belongs to the TrpC family.</text>
</comment>
<protein>
    <recommendedName>
        <fullName evidence="1">Indole-3-glycerol phosphate synthase</fullName>
        <shortName evidence="1">IGPS</shortName>
        <ecNumber evidence="1">4.1.1.48</ecNumber>
    </recommendedName>
</protein>
<evidence type="ECO:0000255" key="1">
    <source>
        <dbReference type="HAMAP-Rule" id="MF_00134"/>
    </source>
</evidence>